<organism>
    <name type="scientific">Synanceia verrucosa</name>
    <name type="common">Reef stonefish</name>
    <dbReference type="NCBI Taxonomy" id="51996"/>
    <lineage>
        <taxon>Eukaryota</taxon>
        <taxon>Metazoa</taxon>
        <taxon>Chordata</taxon>
        <taxon>Craniata</taxon>
        <taxon>Vertebrata</taxon>
        <taxon>Euteleostomi</taxon>
        <taxon>Actinopterygii</taxon>
        <taxon>Neopterygii</taxon>
        <taxon>Teleostei</taxon>
        <taxon>Neoteleostei</taxon>
        <taxon>Acanthomorphata</taxon>
        <taxon>Eupercaria</taxon>
        <taxon>Perciformes</taxon>
        <taxon>Scorpaenoidei</taxon>
        <taxon>Synanceiidae</taxon>
        <taxon>Synanceiinae</taxon>
        <taxon>Synanceia</taxon>
    </lineage>
</organism>
<proteinExistence type="evidence at protein level"/>
<reference key="1">
    <citation type="journal article" date="2006" name="Biochim. Biophys. Acta">
        <title>Purification, properties and cDNA cloning of neoverrucotoxin (neoVTX), a hemolytic lethal factor from the stonefish Synanceia verrucosa venom.</title>
        <authorList>
            <person name="Ueda A."/>
            <person name="Suzuki M."/>
            <person name="Honma T."/>
            <person name="Nagai H."/>
            <person name="Nagashima Y."/>
            <person name="Shiomi K."/>
        </authorList>
    </citation>
    <scope>NUCLEOTIDE SEQUENCE [MRNA]</scope>
    <scope>FUNCTION</scope>
    <scope>SUBUNIT</scope>
    <scope>SUBCELLULAR LOCATION</scope>
    <scope>ACETYLATION AT SER-2</scope>
    <scope>NUMBER OF DISULFIDE BONDS</scope>
    <scope>TOXIC DOSE</scope>
    <source>
        <tissue>Venom</tissue>
        <tissue>Venom gland</tissue>
    </source>
</reference>
<name>STXA_SYNVE</name>
<accession>A0ZSK3</accession>
<sequence>MSSDLVMPALGRPFTLGMLYDTRREKLIPGFSLFGDETLQQYQSSNTQRSSEFKIVASDSTESKSSAMDIEASLGVSFLGGLVEVGGSAKYLNNTKKYQNQSRVTLKYKATTIYKQFTAPPGTVKVQETVITQRGLATHVVTGILYGANAFFVFDSDKVEDTNLQDIQGKMEAVIKKIPTISIEGSASVQLTDEEKSLASNLSCKFHGDFLLESLPTTFEDAVTTYQTLPTLLGEDGASAVPMKVWLVPLKKFFSKAKLLTQEITVSKVRRIHTTLEELYKLKRRANEAMDDKLVQQIPLIHDKISNFHQIFQDYMLTVQKKIAEKLPLVRAGTESEQSLQKIIDDRAKSPFSNENVSTWLEVIEREIAVLKSCAGMVEGTQAKFVSNQTELDREVLAEDVKHALCFVFTSVERNDPYLKVLSDYLESPDSKDGKEAVPSTEDKWCFSTRVVLKMKQRAQTFCDHVNDFEKSRNVGFFVTALENGKFQGASIYHYKDGSLATQDFTFPRMPFVQGYKKRSDLLWYACDLTFDRNTINIWVSLSDNDTFAASEHGKRQNYPKHPERFLCYNQVLCNEGLTGKHYWEVEWNGYVDVGVAYISISRKEDNWVSAIGHNTCSWVFSSIPRAGYVERYNQRQYYVTVPTPGFKQLGVFLNWPDGSLSFYAVSSDEVHHLHTFKTKFTEPVYPAFCLGYRFDHGTVRLL</sequence>
<evidence type="ECO:0000255" key="1">
    <source>
        <dbReference type="PROSITE-ProRule" id="PRU00548"/>
    </source>
</evidence>
<evidence type="ECO:0000269" key="2">
    <source>
    </source>
</evidence>
<evidence type="ECO:0000305" key="3"/>
<evidence type="ECO:0000305" key="4">
    <source>
    </source>
</evidence>
<protein>
    <recommendedName>
        <fullName>Neoverrucotoxin subunit alpha</fullName>
        <shortName>NeoVTX subunit alpha</shortName>
    </recommendedName>
</protein>
<keyword id="KW-0007">Acetylation</keyword>
<keyword id="KW-0204">Cytolysis</keyword>
<keyword id="KW-1015">Disulfide bond</keyword>
<keyword id="KW-0354">Hemolysis</keyword>
<keyword id="KW-0964">Secreted</keyword>
<keyword id="KW-0800">Toxin</keyword>
<feature type="initiator methionine" description="Removed">
    <location>
        <position position="1"/>
    </location>
</feature>
<feature type="chain" id="PRO_0000353123" description="Neoverrucotoxin subunit alpha">
    <location>
        <begin position="2"/>
        <end position="703"/>
    </location>
</feature>
<feature type="domain" description="B30.2/SPRY" evidence="1">
    <location>
        <begin position="508"/>
        <end position="703"/>
    </location>
</feature>
<feature type="modified residue" description="N-acetylserine" evidence="4">
    <location>
        <position position="2"/>
    </location>
</feature>
<comment type="function">
    <text evidence="2">Has hemolytic and lethal activities. Its hemolytic activity is inhibited by anionic lipids, especially potently by cardiolipin.</text>
</comment>
<comment type="subunit">
    <text evidence="2">Heterodimer of alpha and beta subunits.</text>
</comment>
<comment type="subcellular location">
    <subcellularLocation>
        <location evidence="2">Secreted</location>
    </subcellularLocation>
    <text>Secreted into the venom gland lumen. The secretion is proved by the fact that the complete sequence showed below is found in the venom gland's lumen, although no signal peptide has been found. This protein may follow a novel secretion pathway. It has been reported that venom-secreting cells of stonefishes do not possess Golgi apparatus and rough endoplasmic reticulum.</text>
</comment>
<comment type="tissue specificity">
    <text>Expressed by the venom gland.</text>
</comment>
<comment type="PTM">
    <text>Not glycosylated.</text>
</comment>
<comment type="PTM">
    <text>Four intrachain disulfide linkages are present in the heterodimer. No interchain disulfide bound links the two subunits.</text>
</comment>
<comment type="toxic dose">
    <text evidence="2">LD(50) is 0.047 mg/kg by intravenous injection into mice.</text>
</comment>
<comment type="similarity">
    <text evidence="3">Belongs to the SNTX/VTX toxin family.</text>
</comment>
<dbReference type="EMBL" id="AB262392">
    <property type="protein sequence ID" value="BAF41221.1"/>
    <property type="molecule type" value="mRNA"/>
</dbReference>
<dbReference type="SMR" id="A0ZSK3"/>
<dbReference type="iPTMnet" id="A0ZSK3"/>
<dbReference type="GO" id="GO:0005576">
    <property type="term" value="C:extracellular region"/>
    <property type="evidence" value="ECO:0007669"/>
    <property type="project" value="UniProtKB-SubCell"/>
</dbReference>
<dbReference type="GO" id="GO:0090729">
    <property type="term" value="F:toxin activity"/>
    <property type="evidence" value="ECO:0007669"/>
    <property type="project" value="UniProtKB-KW"/>
</dbReference>
<dbReference type="GO" id="GO:0031640">
    <property type="term" value="P:killing of cells of another organism"/>
    <property type="evidence" value="ECO:0007669"/>
    <property type="project" value="UniProtKB-KW"/>
</dbReference>
<dbReference type="CDD" id="cd16040">
    <property type="entry name" value="SPRY_PRY_SNTX"/>
    <property type="match status" value="1"/>
</dbReference>
<dbReference type="Gene3D" id="2.60.120.920">
    <property type="match status" value="1"/>
</dbReference>
<dbReference type="InterPro" id="IPR001870">
    <property type="entry name" value="B30.2/SPRY"/>
</dbReference>
<dbReference type="InterPro" id="IPR043136">
    <property type="entry name" value="B30.2/SPRY_sf"/>
</dbReference>
<dbReference type="InterPro" id="IPR003879">
    <property type="entry name" value="Butyrophylin_SPRY"/>
</dbReference>
<dbReference type="InterPro" id="IPR013320">
    <property type="entry name" value="ConA-like_dom_sf"/>
</dbReference>
<dbReference type="InterPro" id="IPR052090">
    <property type="entry name" value="Cytolytic_pore-forming_toxin"/>
</dbReference>
<dbReference type="InterPro" id="IPR006574">
    <property type="entry name" value="PRY"/>
</dbReference>
<dbReference type="InterPro" id="IPR003877">
    <property type="entry name" value="SPRY_dom"/>
</dbReference>
<dbReference type="InterPro" id="IPR048997">
    <property type="entry name" value="Stonustoxin-like_helical"/>
</dbReference>
<dbReference type="InterPro" id="IPR040581">
    <property type="entry name" value="Thioredoxin_11"/>
</dbReference>
<dbReference type="PANTHER" id="PTHR31594">
    <property type="entry name" value="AIG1-TYPE G DOMAIN-CONTAINING PROTEIN"/>
    <property type="match status" value="1"/>
</dbReference>
<dbReference type="PANTHER" id="PTHR31594:SF16">
    <property type="entry name" value="SI:CH211-281L24.3"/>
    <property type="match status" value="1"/>
</dbReference>
<dbReference type="Pfam" id="PF13765">
    <property type="entry name" value="PRY"/>
    <property type="match status" value="1"/>
</dbReference>
<dbReference type="Pfam" id="PF00622">
    <property type="entry name" value="SPRY"/>
    <property type="match status" value="1"/>
</dbReference>
<dbReference type="Pfam" id="PF21109">
    <property type="entry name" value="Stonustoxin_helical"/>
    <property type="match status" value="1"/>
</dbReference>
<dbReference type="Pfam" id="PF18078">
    <property type="entry name" value="Thioredoxin_11"/>
    <property type="match status" value="1"/>
</dbReference>
<dbReference type="PRINTS" id="PR01407">
    <property type="entry name" value="BUTYPHLNCDUF"/>
</dbReference>
<dbReference type="SMART" id="SM00589">
    <property type="entry name" value="PRY"/>
    <property type="match status" value="1"/>
</dbReference>
<dbReference type="SMART" id="SM00449">
    <property type="entry name" value="SPRY"/>
    <property type="match status" value="1"/>
</dbReference>
<dbReference type="SUPFAM" id="SSF49899">
    <property type="entry name" value="Concanavalin A-like lectins/glucanases"/>
    <property type="match status" value="1"/>
</dbReference>
<dbReference type="PROSITE" id="PS50188">
    <property type="entry name" value="B302_SPRY"/>
    <property type="match status" value="1"/>
</dbReference>